<dbReference type="EC" id="1.7.3.3"/>
<dbReference type="EMBL" id="CU329672">
    <property type="protein sequence ID" value="CAA20878.1"/>
    <property type="molecule type" value="Genomic_DNA"/>
</dbReference>
<dbReference type="PIR" id="T40869">
    <property type="entry name" value="T40869"/>
</dbReference>
<dbReference type="SMR" id="O74409"/>
<dbReference type="BioGRID" id="275531">
    <property type="interactions" value="1"/>
</dbReference>
<dbReference type="FunCoup" id="O74409">
    <property type="interactions" value="58"/>
</dbReference>
<dbReference type="STRING" id="284812.O74409"/>
<dbReference type="PaxDb" id="4896-SPCC1223.09.1"/>
<dbReference type="EnsemblFungi" id="SPCC1223.09.1">
    <property type="protein sequence ID" value="SPCC1223.09.1:pep"/>
    <property type="gene ID" value="SPCC1223.09"/>
</dbReference>
<dbReference type="KEGG" id="spo:2538957"/>
<dbReference type="PomBase" id="SPCC1223.09"/>
<dbReference type="VEuPathDB" id="FungiDB:SPCC1223.09"/>
<dbReference type="eggNOG" id="KOG1599">
    <property type="taxonomic scope" value="Eukaryota"/>
</dbReference>
<dbReference type="HOGENOM" id="CLU_048151_0_0_1"/>
<dbReference type="InParanoid" id="O74409"/>
<dbReference type="OMA" id="ATMYKMS"/>
<dbReference type="PhylomeDB" id="O74409"/>
<dbReference type="UniPathway" id="UPA00394">
    <property type="reaction ID" value="UER00650"/>
</dbReference>
<dbReference type="PRO" id="PR:O74409"/>
<dbReference type="Proteomes" id="UP000002485">
    <property type="component" value="Chromosome III"/>
</dbReference>
<dbReference type="GO" id="GO:0005829">
    <property type="term" value="C:cytosol"/>
    <property type="evidence" value="ECO:0007005"/>
    <property type="project" value="PomBase"/>
</dbReference>
<dbReference type="GO" id="GO:0005634">
    <property type="term" value="C:nucleus"/>
    <property type="evidence" value="ECO:0007005"/>
    <property type="project" value="PomBase"/>
</dbReference>
<dbReference type="GO" id="GO:0005777">
    <property type="term" value="C:peroxisome"/>
    <property type="evidence" value="ECO:0000318"/>
    <property type="project" value="GO_Central"/>
</dbReference>
<dbReference type="GO" id="GO:0004846">
    <property type="term" value="F:urate oxidase activity"/>
    <property type="evidence" value="ECO:0000269"/>
    <property type="project" value="PomBase"/>
</dbReference>
<dbReference type="GO" id="GO:0006145">
    <property type="term" value="P:purine nucleobase catabolic process"/>
    <property type="evidence" value="ECO:0000318"/>
    <property type="project" value="GO_Central"/>
</dbReference>
<dbReference type="GO" id="GO:0019628">
    <property type="term" value="P:urate catabolic process"/>
    <property type="evidence" value="ECO:0000318"/>
    <property type="project" value="GO_Central"/>
</dbReference>
<dbReference type="GO" id="GO:0019627">
    <property type="term" value="P:urea metabolic process"/>
    <property type="evidence" value="ECO:0000305"/>
    <property type="project" value="PomBase"/>
</dbReference>
<dbReference type="FunFam" id="3.10.270.10:FF:000001">
    <property type="entry name" value="Uricase"/>
    <property type="match status" value="1"/>
</dbReference>
<dbReference type="Gene3D" id="3.10.270.10">
    <property type="entry name" value="Urate Oxidase"/>
    <property type="match status" value="1"/>
</dbReference>
<dbReference type="InterPro" id="IPR002042">
    <property type="entry name" value="Uricase"/>
</dbReference>
<dbReference type="InterPro" id="IPR019842">
    <property type="entry name" value="Uricase_CS"/>
</dbReference>
<dbReference type="NCBIfam" id="TIGR03383">
    <property type="entry name" value="urate_oxi"/>
    <property type="match status" value="1"/>
</dbReference>
<dbReference type="PANTHER" id="PTHR42874">
    <property type="entry name" value="URICASE"/>
    <property type="match status" value="1"/>
</dbReference>
<dbReference type="PANTHER" id="PTHR42874:SF1">
    <property type="entry name" value="URICASE"/>
    <property type="match status" value="1"/>
</dbReference>
<dbReference type="Pfam" id="PF01014">
    <property type="entry name" value="Uricase"/>
    <property type="match status" value="2"/>
</dbReference>
<dbReference type="PIRSF" id="PIRSF000241">
    <property type="entry name" value="Urate_oxidase"/>
    <property type="match status" value="1"/>
</dbReference>
<dbReference type="PRINTS" id="PR00093">
    <property type="entry name" value="URICASE"/>
</dbReference>
<dbReference type="SUPFAM" id="SSF55620">
    <property type="entry name" value="Tetrahydrobiopterin biosynthesis enzymes-like"/>
    <property type="match status" value="2"/>
</dbReference>
<dbReference type="PROSITE" id="PS00366">
    <property type="entry name" value="URICASE"/>
    <property type="match status" value="1"/>
</dbReference>
<evidence type="ECO:0000250" key="1"/>
<evidence type="ECO:0000250" key="2">
    <source>
        <dbReference type="UniProtKB" id="D0VWQ1"/>
    </source>
</evidence>
<evidence type="ECO:0000250" key="3">
    <source>
        <dbReference type="UniProtKB" id="Q00511"/>
    </source>
</evidence>
<evidence type="ECO:0000269" key="4">
    <source>
    </source>
</evidence>
<evidence type="ECO:0000269" key="5">
    <source>
    </source>
</evidence>
<evidence type="ECO:0000305" key="6"/>
<organism>
    <name type="scientific">Schizosaccharomyces pombe (strain 972 / ATCC 24843)</name>
    <name type="common">Fission yeast</name>
    <dbReference type="NCBI Taxonomy" id="284812"/>
    <lineage>
        <taxon>Eukaryota</taxon>
        <taxon>Fungi</taxon>
        <taxon>Dikarya</taxon>
        <taxon>Ascomycota</taxon>
        <taxon>Taphrinomycotina</taxon>
        <taxon>Schizosaccharomycetes</taxon>
        <taxon>Schizosaccharomycetales</taxon>
        <taxon>Schizosaccharomycetaceae</taxon>
        <taxon>Schizosaccharomyces</taxon>
    </lineage>
</organism>
<reference key="1">
    <citation type="journal article" date="2002" name="Nature">
        <title>The genome sequence of Schizosaccharomyces pombe.</title>
        <authorList>
            <person name="Wood V."/>
            <person name="Gwilliam R."/>
            <person name="Rajandream M.A."/>
            <person name="Lyne M.H."/>
            <person name="Lyne R."/>
            <person name="Stewart A."/>
            <person name="Sgouros J.G."/>
            <person name="Peat N."/>
            <person name="Hayles J."/>
            <person name="Baker S.G."/>
            <person name="Basham D."/>
            <person name="Bowman S."/>
            <person name="Brooks K."/>
            <person name="Brown D."/>
            <person name="Brown S."/>
            <person name="Chillingworth T."/>
            <person name="Churcher C.M."/>
            <person name="Collins M."/>
            <person name="Connor R."/>
            <person name="Cronin A."/>
            <person name="Davis P."/>
            <person name="Feltwell T."/>
            <person name="Fraser A."/>
            <person name="Gentles S."/>
            <person name="Goble A."/>
            <person name="Hamlin N."/>
            <person name="Harris D.E."/>
            <person name="Hidalgo J."/>
            <person name="Hodgson G."/>
            <person name="Holroyd S."/>
            <person name="Hornsby T."/>
            <person name="Howarth S."/>
            <person name="Huckle E.J."/>
            <person name="Hunt S."/>
            <person name="Jagels K."/>
            <person name="James K.D."/>
            <person name="Jones L."/>
            <person name="Jones M."/>
            <person name="Leather S."/>
            <person name="McDonald S."/>
            <person name="McLean J."/>
            <person name="Mooney P."/>
            <person name="Moule S."/>
            <person name="Mungall K.L."/>
            <person name="Murphy L.D."/>
            <person name="Niblett D."/>
            <person name="Odell C."/>
            <person name="Oliver K."/>
            <person name="O'Neil S."/>
            <person name="Pearson D."/>
            <person name="Quail M.A."/>
            <person name="Rabbinowitsch E."/>
            <person name="Rutherford K.M."/>
            <person name="Rutter S."/>
            <person name="Saunders D."/>
            <person name="Seeger K."/>
            <person name="Sharp S."/>
            <person name="Skelton J."/>
            <person name="Simmonds M.N."/>
            <person name="Squares R."/>
            <person name="Squares S."/>
            <person name="Stevens K."/>
            <person name="Taylor K."/>
            <person name="Taylor R.G."/>
            <person name="Tivey A."/>
            <person name="Walsh S.V."/>
            <person name="Warren T."/>
            <person name="Whitehead S."/>
            <person name="Woodward J.R."/>
            <person name="Volckaert G."/>
            <person name="Aert R."/>
            <person name="Robben J."/>
            <person name="Grymonprez B."/>
            <person name="Weltjens I."/>
            <person name="Vanstreels E."/>
            <person name="Rieger M."/>
            <person name="Schaefer M."/>
            <person name="Mueller-Auer S."/>
            <person name="Gabel C."/>
            <person name="Fuchs M."/>
            <person name="Duesterhoeft A."/>
            <person name="Fritzc C."/>
            <person name="Holzer E."/>
            <person name="Moestl D."/>
            <person name="Hilbert H."/>
            <person name="Borzym K."/>
            <person name="Langer I."/>
            <person name="Beck A."/>
            <person name="Lehrach H."/>
            <person name="Reinhardt R."/>
            <person name="Pohl T.M."/>
            <person name="Eger P."/>
            <person name="Zimmermann W."/>
            <person name="Wedler H."/>
            <person name="Wambutt R."/>
            <person name="Purnelle B."/>
            <person name="Goffeau A."/>
            <person name="Cadieu E."/>
            <person name="Dreano S."/>
            <person name="Gloux S."/>
            <person name="Lelaure V."/>
            <person name="Mottier S."/>
            <person name="Galibert F."/>
            <person name="Aves S.J."/>
            <person name="Xiang Z."/>
            <person name="Hunt C."/>
            <person name="Moore K."/>
            <person name="Hurst S.M."/>
            <person name="Lucas M."/>
            <person name="Rochet M."/>
            <person name="Gaillardin C."/>
            <person name="Tallada V.A."/>
            <person name="Garzon A."/>
            <person name="Thode G."/>
            <person name="Daga R.R."/>
            <person name="Cruzado L."/>
            <person name="Jimenez J."/>
            <person name="Sanchez M."/>
            <person name="del Rey F."/>
            <person name="Benito J."/>
            <person name="Dominguez A."/>
            <person name="Revuelta J.L."/>
            <person name="Moreno S."/>
            <person name="Armstrong J."/>
            <person name="Forsburg S.L."/>
            <person name="Cerutti L."/>
            <person name="Lowe T."/>
            <person name="McCombie W.R."/>
            <person name="Paulsen I."/>
            <person name="Potashkin J."/>
            <person name="Shpakovski G.V."/>
            <person name="Ussery D."/>
            <person name="Barrell B.G."/>
            <person name="Nurse P."/>
        </authorList>
    </citation>
    <scope>NUCLEOTIDE SEQUENCE [LARGE SCALE GENOMIC DNA]</scope>
    <source>
        <strain>972 / ATCC 24843</strain>
    </source>
</reference>
<reference key="2">
    <citation type="journal article" date="1985" name="J. Gen. Microbiol.">
        <title>The all2 gene is required for the induction of the purine deamination pathway in Schizosaccharomyces pombe.</title>
        <authorList>
            <person name="Fluri R."/>
            <person name="Kinghorn J.R."/>
        </authorList>
    </citation>
    <scope>CATALYTIC ACTIVITY</scope>
    <scope>FUNCTION</scope>
</reference>
<reference key="3">
    <citation type="journal article" date="2006" name="Nat. Biotechnol.">
        <title>ORFeome cloning and global analysis of protein localization in the fission yeast Schizosaccharomyces pombe.</title>
        <authorList>
            <person name="Matsuyama A."/>
            <person name="Arai R."/>
            <person name="Yashiroda Y."/>
            <person name="Shirai A."/>
            <person name="Kamata A."/>
            <person name="Sekido S."/>
            <person name="Kobayashi Y."/>
            <person name="Hashimoto A."/>
            <person name="Hamamoto M."/>
            <person name="Hiraoka Y."/>
            <person name="Horinouchi S."/>
            <person name="Yoshida M."/>
        </authorList>
    </citation>
    <scope>SUBCELLULAR LOCATION [LARGE SCALE ANALYSIS]</scope>
</reference>
<gene>
    <name type="ORF">SPCC1223.09</name>
</gene>
<protein>
    <recommendedName>
        <fullName>Uricase</fullName>
        <ecNumber>1.7.3.3</ecNumber>
    </recommendedName>
    <alternativeName>
        <fullName>Urate oxidase</fullName>
    </alternativeName>
</protein>
<proteinExistence type="evidence at protein level"/>
<comment type="function">
    <text evidence="5">Catalyzes the oxidation of uric acid to 5-hydroxyisourate, which is further processed to form (S)-allantoin.</text>
</comment>
<comment type="catalytic activity">
    <reaction evidence="5">
        <text>urate + O2 + H2O = 5-hydroxyisourate + H2O2</text>
        <dbReference type="Rhea" id="RHEA:21368"/>
        <dbReference type="ChEBI" id="CHEBI:15377"/>
        <dbReference type="ChEBI" id="CHEBI:15379"/>
        <dbReference type="ChEBI" id="CHEBI:16240"/>
        <dbReference type="ChEBI" id="CHEBI:17775"/>
        <dbReference type="ChEBI" id="CHEBI:18072"/>
        <dbReference type="EC" id="1.7.3.3"/>
    </reaction>
</comment>
<comment type="pathway">
    <text>Purine metabolism; urate degradation; (S)-allantoin from urate: step 1/3.</text>
</comment>
<comment type="subcellular location">
    <subcellularLocation>
        <location evidence="1">Peroxisome</location>
    </subcellularLocation>
    <subcellularLocation>
        <location evidence="4">Cytoplasm</location>
    </subcellularLocation>
    <subcellularLocation>
        <location evidence="4">Nucleus</location>
    </subcellularLocation>
</comment>
<comment type="similarity">
    <text evidence="6">Belongs to the uricase family.</text>
</comment>
<feature type="chain" id="PRO_0000165998" description="Uricase">
    <location>
        <begin position="1"/>
        <end position="296"/>
    </location>
</feature>
<feature type="active site" description="Charge relay system" evidence="2">
    <location>
        <position position="14"/>
    </location>
</feature>
<feature type="active site" description="Charge relay system" evidence="2">
    <location>
        <position position="61"/>
    </location>
</feature>
<feature type="active site" description="Charge relay system" evidence="2">
    <location>
        <position position="258"/>
    </location>
</feature>
<feature type="binding site" evidence="3">
    <location>
        <position position="61"/>
    </location>
    <ligand>
        <name>urate</name>
        <dbReference type="ChEBI" id="CHEBI:17775"/>
    </ligand>
</feature>
<feature type="binding site" evidence="3">
    <location>
        <position position="62"/>
    </location>
    <ligand>
        <name>urate</name>
        <dbReference type="ChEBI" id="CHEBI:17775"/>
    </ligand>
</feature>
<feature type="binding site" evidence="3">
    <location>
        <position position="163"/>
    </location>
    <ligand>
        <name>urate</name>
        <dbReference type="ChEBI" id="CHEBI:17775"/>
    </ligand>
</feature>
<feature type="binding site" evidence="3">
    <location>
        <position position="180"/>
    </location>
    <ligand>
        <name>urate</name>
        <dbReference type="ChEBI" id="CHEBI:17775"/>
    </ligand>
</feature>
<feature type="binding site" evidence="3">
    <location>
        <position position="229"/>
    </location>
    <ligand>
        <name>urate</name>
        <dbReference type="ChEBI" id="CHEBI:17775"/>
    </ligand>
</feature>
<feature type="binding site" evidence="3">
    <location>
        <position position="230"/>
    </location>
    <ligand>
        <name>urate</name>
        <dbReference type="ChEBI" id="CHEBI:17775"/>
    </ligand>
</feature>
<feature type="binding site" evidence="3">
    <location>
        <position position="256"/>
    </location>
    <ligand>
        <name>urate</name>
        <dbReference type="ChEBI" id="CHEBI:17775"/>
    </ligand>
</feature>
<accession>O74409</accession>
<name>URIC_SCHPO</name>
<sequence length="296" mass="33610">MSETTYVKQCAYGKTLVRFMKKDICPKTKTHTVYEMDVQSLLTGELEESYTKADNSIVVPTDTQKNTIYVFAKNNDVSVPEVFAAKLAKHFVDKYKHIHGAALDITITPWTRMEVQGKPHSHSFIRNPGETRKTHVVFSEGKGFDVVSSLKDVLVLKSTGSGFTNFHKCEFTTLPEVTDRIFSTSIDCNYTFKHFDTFEELAGFDFNSIYEKVKEITLETFALDDSESVQATMYKMADTIINTYPAINEVYYALPNKHYFEINLAPFNIDNLGSNCSLYQPQAYPSGYITCTVARK</sequence>
<keyword id="KW-0963">Cytoplasm</keyword>
<keyword id="KW-0539">Nucleus</keyword>
<keyword id="KW-0560">Oxidoreductase</keyword>
<keyword id="KW-0576">Peroxisome</keyword>
<keyword id="KW-0659">Purine metabolism</keyword>
<keyword id="KW-1185">Reference proteome</keyword>